<proteinExistence type="inferred from homology"/>
<reference key="1">
    <citation type="journal article" date="2002" name="J. Bacteriol.">
        <title>Whole-genome comparison of Mycobacterium tuberculosis clinical and laboratory strains.</title>
        <authorList>
            <person name="Fleischmann R.D."/>
            <person name="Alland D."/>
            <person name="Eisen J.A."/>
            <person name="Carpenter L."/>
            <person name="White O."/>
            <person name="Peterson J.D."/>
            <person name="DeBoy R.T."/>
            <person name="Dodson R.J."/>
            <person name="Gwinn M.L."/>
            <person name="Haft D.H."/>
            <person name="Hickey E.K."/>
            <person name="Kolonay J.F."/>
            <person name="Nelson W.C."/>
            <person name="Umayam L.A."/>
            <person name="Ermolaeva M.D."/>
            <person name="Salzberg S.L."/>
            <person name="Delcher A."/>
            <person name="Utterback T.R."/>
            <person name="Weidman J.F."/>
            <person name="Khouri H.M."/>
            <person name="Gill J."/>
            <person name="Mikula A."/>
            <person name="Bishai W."/>
            <person name="Jacobs W.R. Jr."/>
            <person name="Venter J.C."/>
            <person name="Fraser C.M."/>
        </authorList>
    </citation>
    <scope>NUCLEOTIDE SEQUENCE [LARGE SCALE GENOMIC DNA]</scope>
    <source>
        <strain>CDC 1551 / Oshkosh</strain>
    </source>
</reference>
<feature type="chain" id="PRO_0000428552" description="Urease subunit gamma">
    <location>
        <begin position="1"/>
        <end position="100"/>
    </location>
</feature>
<keyword id="KW-0963">Cytoplasm</keyword>
<keyword id="KW-0378">Hydrolase</keyword>
<keyword id="KW-1185">Reference proteome</keyword>
<name>URE3_MYCTO</name>
<organism>
    <name type="scientific">Mycobacterium tuberculosis (strain CDC 1551 / Oshkosh)</name>
    <dbReference type="NCBI Taxonomy" id="83331"/>
    <lineage>
        <taxon>Bacteria</taxon>
        <taxon>Bacillati</taxon>
        <taxon>Actinomycetota</taxon>
        <taxon>Actinomycetes</taxon>
        <taxon>Mycobacteriales</taxon>
        <taxon>Mycobacteriaceae</taxon>
        <taxon>Mycobacterium</taxon>
        <taxon>Mycobacterium tuberculosis complex</taxon>
    </lineage>
</organism>
<gene>
    <name evidence="1" type="primary">ureA</name>
    <name type="ordered locus">MT1896</name>
</gene>
<comment type="catalytic activity">
    <reaction evidence="1">
        <text>urea + 2 H2O + H(+) = hydrogencarbonate + 2 NH4(+)</text>
        <dbReference type="Rhea" id="RHEA:20557"/>
        <dbReference type="ChEBI" id="CHEBI:15377"/>
        <dbReference type="ChEBI" id="CHEBI:15378"/>
        <dbReference type="ChEBI" id="CHEBI:16199"/>
        <dbReference type="ChEBI" id="CHEBI:17544"/>
        <dbReference type="ChEBI" id="CHEBI:28938"/>
        <dbReference type="EC" id="3.5.1.5"/>
    </reaction>
</comment>
<comment type="pathway">
    <text evidence="1">Nitrogen metabolism; urea degradation; CO(2) and NH(3) from urea (urease route): step 1/1.</text>
</comment>
<comment type="subunit">
    <text evidence="1">Heterotrimer of UreA (gamma), UreB (beta) and UreC (alpha) subunits. Three heterotrimers associate to form the active enzyme.</text>
</comment>
<comment type="subcellular location">
    <subcellularLocation>
        <location evidence="1">Cytoplasm</location>
    </subcellularLocation>
</comment>
<comment type="similarity">
    <text evidence="1">Belongs to the urease gamma subunit family.</text>
</comment>
<protein>
    <recommendedName>
        <fullName evidence="1">Urease subunit gamma</fullName>
        <ecNumber evidence="1">3.5.1.5</ecNumber>
    </recommendedName>
    <alternativeName>
        <fullName evidence="1">Urea amidohydrolase subunit gamma</fullName>
    </alternativeName>
</protein>
<dbReference type="EC" id="3.5.1.5" evidence="1"/>
<dbReference type="EMBL" id="AE000516">
    <property type="protein sequence ID" value="AAK46167.1"/>
    <property type="molecule type" value="Genomic_DNA"/>
</dbReference>
<dbReference type="PIR" id="H70664">
    <property type="entry name" value="H70664"/>
</dbReference>
<dbReference type="RefSeq" id="WP_003409305.1">
    <property type="nucleotide sequence ID" value="NZ_KK341227.1"/>
</dbReference>
<dbReference type="SMR" id="P9WFE6"/>
<dbReference type="KEGG" id="mtc:MT1896"/>
<dbReference type="PATRIC" id="fig|83331.31.peg.2040"/>
<dbReference type="HOGENOM" id="CLU_145825_1_0_11"/>
<dbReference type="UniPathway" id="UPA00258">
    <property type="reaction ID" value="UER00370"/>
</dbReference>
<dbReference type="Proteomes" id="UP000001020">
    <property type="component" value="Chromosome"/>
</dbReference>
<dbReference type="GO" id="GO:0005737">
    <property type="term" value="C:cytoplasm"/>
    <property type="evidence" value="ECO:0007669"/>
    <property type="project" value="UniProtKB-SubCell"/>
</dbReference>
<dbReference type="GO" id="GO:0016151">
    <property type="term" value="F:nickel cation binding"/>
    <property type="evidence" value="ECO:0007669"/>
    <property type="project" value="InterPro"/>
</dbReference>
<dbReference type="GO" id="GO:0009039">
    <property type="term" value="F:urease activity"/>
    <property type="evidence" value="ECO:0007669"/>
    <property type="project" value="UniProtKB-UniRule"/>
</dbReference>
<dbReference type="GO" id="GO:0043419">
    <property type="term" value="P:urea catabolic process"/>
    <property type="evidence" value="ECO:0007669"/>
    <property type="project" value="UniProtKB-UniRule"/>
</dbReference>
<dbReference type="CDD" id="cd00390">
    <property type="entry name" value="Urease_gamma"/>
    <property type="match status" value="1"/>
</dbReference>
<dbReference type="FunFam" id="3.30.280.10:FF:000002">
    <property type="entry name" value="Urease subunit gamma"/>
    <property type="match status" value="1"/>
</dbReference>
<dbReference type="Gene3D" id="3.30.280.10">
    <property type="entry name" value="Urease, gamma-like subunit"/>
    <property type="match status" value="1"/>
</dbReference>
<dbReference type="HAMAP" id="MF_00739">
    <property type="entry name" value="Urease_gamma"/>
    <property type="match status" value="1"/>
</dbReference>
<dbReference type="InterPro" id="IPR012010">
    <property type="entry name" value="Urease_gamma"/>
</dbReference>
<dbReference type="InterPro" id="IPR002026">
    <property type="entry name" value="Urease_gamma/gamma-beta_su"/>
</dbReference>
<dbReference type="InterPro" id="IPR036463">
    <property type="entry name" value="Urease_gamma_sf"/>
</dbReference>
<dbReference type="InterPro" id="IPR050069">
    <property type="entry name" value="Urease_subunit"/>
</dbReference>
<dbReference type="NCBIfam" id="NF009712">
    <property type="entry name" value="PRK13241.1"/>
    <property type="match status" value="1"/>
</dbReference>
<dbReference type="NCBIfam" id="TIGR00193">
    <property type="entry name" value="urease_gam"/>
    <property type="match status" value="1"/>
</dbReference>
<dbReference type="PANTHER" id="PTHR33569">
    <property type="entry name" value="UREASE"/>
    <property type="match status" value="1"/>
</dbReference>
<dbReference type="PANTHER" id="PTHR33569:SF1">
    <property type="entry name" value="UREASE"/>
    <property type="match status" value="1"/>
</dbReference>
<dbReference type="Pfam" id="PF00547">
    <property type="entry name" value="Urease_gamma"/>
    <property type="match status" value="1"/>
</dbReference>
<dbReference type="PIRSF" id="PIRSF001223">
    <property type="entry name" value="Urease_gamma"/>
    <property type="match status" value="1"/>
</dbReference>
<dbReference type="SUPFAM" id="SSF54111">
    <property type="entry name" value="Urease, gamma-subunit"/>
    <property type="match status" value="1"/>
</dbReference>
<evidence type="ECO:0000255" key="1">
    <source>
        <dbReference type="HAMAP-Rule" id="MF_00739"/>
    </source>
</evidence>
<accession>P9WFE6</accession>
<accession>L0TAS5</accession>
<accession>P0A676</accession>
<accession>P50043</accession>
<sequence length="100" mass="11090">MRLTPHEQERLLLSYAAELARRRRARGLRLNHPEAIAVIADHILEGARDGRTVAELMASGREVLGRDDVMEGVPEMLAEVQVEATFPDGTKLVTVHQPIA</sequence>